<organism evidence="6">
    <name type="scientific">Arabidopsis thaliana</name>
    <name type="common">Mouse-ear cress</name>
    <dbReference type="NCBI Taxonomy" id="3702"/>
    <lineage>
        <taxon>Eukaryota</taxon>
        <taxon>Viridiplantae</taxon>
        <taxon>Streptophyta</taxon>
        <taxon>Embryophyta</taxon>
        <taxon>Tracheophyta</taxon>
        <taxon>Spermatophyta</taxon>
        <taxon>Magnoliopsida</taxon>
        <taxon>eudicotyledons</taxon>
        <taxon>Gunneridae</taxon>
        <taxon>Pentapetalae</taxon>
        <taxon>rosids</taxon>
        <taxon>malvids</taxon>
        <taxon>Brassicales</taxon>
        <taxon>Brassicaceae</taxon>
        <taxon>Camelineae</taxon>
        <taxon>Arabidopsis</taxon>
    </lineage>
</organism>
<feature type="chain" id="PRO_0000432644" description="Glycolipid transfer protein 1">
    <location>
        <begin position="1"/>
        <end position="202"/>
    </location>
</feature>
<feature type="binding site" evidence="3">
    <location>
        <position position="52"/>
    </location>
    <ligand>
        <name>a ganglioside GM3 (d18:1(4E))</name>
        <dbReference type="ChEBI" id="CHEBI:60065"/>
    </ligand>
</feature>
<feature type="binding site" evidence="3">
    <location>
        <position position="56"/>
    </location>
    <ligand>
        <name>a ganglioside GM3 (d18:1(4E))</name>
        <dbReference type="ChEBI" id="CHEBI:60065"/>
    </ligand>
</feature>
<feature type="binding site" evidence="3">
    <location>
        <position position="99"/>
    </location>
    <ligand>
        <name>a ganglioside GM3 (d18:1(4E))</name>
        <dbReference type="ChEBI" id="CHEBI:60065"/>
    </ligand>
</feature>
<feature type="binding site" evidence="3">
    <location>
        <position position="138"/>
    </location>
    <ligand>
        <name>a ganglioside GM3 (d18:1(4E))</name>
        <dbReference type="ChEBI" id="CHEBI:60065"/>
    </ligand>
</feature>
<proteinExistence type="evidence at transcript level"/>
<evidence type="ECO:0000303" key="1">
    <source>
    </source>
</evidence>
<evidence type="ECO:0000305" key="2"/>
<evidence type="ECO:0000305" key="3">
    <source>
    </source>
</evidence>
<evidence type="ECO:0000312" key="4">
    <source>
        <dbReference type="Araport" id="AT2G33470"/>
    </source>
</evidence>
<evidence type="ECO:0000312" key="5">
    <source>
        <dbReference type="EMBL" id="AAB80664.1"/>
    </source>
</evidence>
<evidence type="ECO:0000312" key="6">
    <source>
        <dbReference type="Proteomes" id="UP000006548"/>
    </source>
</evidence>
<accession>O22797</accession>
<dbReference type="EMBL" id="AC002332">
    <property type="protein sequence ID" value="AAB80664.1"/>
    <property type="molecule type" value="Genomic_DNA"/>
</dbReference>
<dbReference type="EMBL" id="CP002685">
    <property type="protein sequence ID" value="AEC08838.1"/>
    <property type="molecule type" value="Genomic_DNA"/>
</dbReference>
<dbReference type="EMBL" id="CP002685">
    <property type="protein sequence ID" value="AEC08839.1"/>
    <property type="molecule type" value="Genomic_DNA"/>
</dbReference>
<dbReference type="EMBL" id="BT004207">
    <property type="protein sequence ID" value="AAO42225.1"/>
    <property type="molecule type" value="mRNA"/>
</dbReference>
<dbReference type="EMBL" id="BT005674">
    <property type="protein sequence ID" value="AAO64094.1"/>
    <property type="molecule type" value="mRNA"/>
</dbReference>
<dbReference type="EMBL" id="AK317264">
    <property type="protein sequence ID" value="BAH19942.1"/>
    <property type="molecule type" value="mRNA"/>
</dbReference>
<dbReference type="EMBL" id="AY085884">
    <property type="protein sequence ID" value="AAM63096.1"/>
    <property type="molecule type" value="mRNA"/>
</dbReference>
<dbReference type="PIR" id="H84745">
    <property type="entry name" value="H84745"/>
</dbReference>
<dbReference type="RefSeq" id="NP_565766.1">
    <property type="nucleotide sequence ID" value="NM_128907.5"/>
</dbReference>
<dbReference type="RefSeq" id="NP_973588.1">
    <property type="nucleotide sequence ID" value="NM_201859.4"/>
</dbReference>
<dbReference type="SMR" id="O22797"/>
<dbReference type="FunCoup" id="O22797">
    <property type="interactions" value="3964"/>
</dbReference>
<dbReference type="STRING" id="3702.O22797"/>
<dbReference type="PaxDb" id="3702-AT2G33470.1"/>
<dbReference type="ProteomicsDB" id="248524"/>
<dbReference type="DNASU" id="817912"/>
<dbReference type="EnsemblPlants" id="AT2G33470.1">
    <property type="protein sequence ID" value="AT2G33470.1"/>
    <property type="gene ID" value="AT2G33470"/>
</dbReference>
<dbReference type="EnsemblPlants" id="AT2G33470.2">
    <property type="protein sequence ID" value="AT2G33470.2"/>
    <property type="gene ID" value="AT2G33470"/>
</dbReference>
<dbReference type="GeneID" id="817912"/>
<dbReference type="Gramene" id="AT2G33470.1">
    <property type="protein sequence ID" value="AT2G33470.1"/>
    <property type="gene ID" value="AT2G33470"/>
</dbReference>
<dbReference type="Gramene" id="AT2G33470.2">
    <property type="protein sequence ID" value="AT2G33470.2"/>
    <property type="gene ID" value="AT2G33470"/>
</dbReference>
<dbReference type="KEGG" id="ath:AT2G33470"/>
<dbReference type="Araport" id="AT2G33470"/>
<dbReference type="TAIR" id="AT2G33470">
    <property type="gene designation" value="GLTP1"/>
</dbReference>
<dbReference type="eggNOG" id="KOG3221">
    <property type="taxonomic scope" value="Eukaryota"/>
</dbReference>
<dbReference type="HOGENOM" id="CLU_079400_3_0_1"/>
<dbReference type="InParanoid" id="O22797"/>
<dbReference type="OMA" id="EMHGAEW"/>
<dbReference type="OrthoDB" id="205255at2759"/>
<dbReference type="PhylomeDB" id="O22797"/>
<dbReference type="PRO" id="PR:O22797"/>
<dbReference type="Proteomes" id="UP000006548">
    <property type="component" value="Chromosome 2"/>
</dbReference>
<dbReference type="ExpressionAtlas" id="O22797">
    <property type="expression patterns" value="baseline and differential"/>
</dbReference>
<dbReference type="GO" id="GO:0005737">
    <property type="term" value="C:cytoplasm"/>
    <property type="evidence" value="ECO:0007669"/>
    <property type="project" value="InterPro"/>
</dbReference>
<dbReference type="GO" id="GO:0005886">
    <property type="term" value="C:plasma membrane"/>
    <property type="evidence" value="ECO:0007005"/>
    <property type="project" value="TAIR"/>
</dbReference>
<dbReference type="GO" id="GO:0120013">
    <property type="term" value="F:lipid transfer activity"/>
    <property type="evidence" value="ECO:0007669"/>
    <property type="project" value="InterPro"/>
</dbReference>
<dbReference type="FunFam" id="1.10.3520.10:FF:000004">
    <property type="entry name" value="Glycolipid transfer protein 1"/>
    <property type="match status" value="1"/>
</dbReference>
<dbReference type="Gene3D" id="1.10.3520.10">
    <property type="entry name" value="Glycolipid transfer protein"/>
    <property type="match status" value="1"/>
</dbReference>
<dbReference type="InterPro" id="IPR036497">
    <property type="entry name" value="GLTP_sf"/>
</dbReference>
<dbReference type="InterPro" id="IPR014830">
    <property type="entry name" value="Glycolipid_transfer_prot_dom"/>
</dbReference>
<dbReference type="PANTHER" id="PTHR10219">
    <property type="entry name" value="GLYCOLIPID TRANSFER PROTEIN-RELATED"/>
    <property type="match status" value="1"/>
</dbReference>
<dbReference type="PANTHER" id="PTHR10219:SF25">
    <property type="entry name" value="PLECKSTRIN HOMOLOGY DOMAIN-CONTAINING FAMILY A MEMBER 8"/>
    <property type="match status" value="1"/>
</dbReference>
<dbReference type="Pfam" id="PF08718">
    <property type="entry name" value="GLTP"/>
    <property type="match status" value="1"/>
</dbReference>
<dbReference type="SUPFAM" id="SSF110004">
    <property type="entry name" value="Glycolipid transfer protein, GLTP"/>
    <property type="match status" value="1"/>
</dbReference>
<protein>
    <recommendedName>
        <fullName evidence="1">Glycolipid transfer protein 1</fullName>
    </recommendedName>
</protein>
<comment type="function">
    <text evidence="3">May be involved in glycolipids transfer.</text>
</comment>
<comment type="similarity">
    <text evidence="2">Belongs to the GLTP family.</text>
</comment>
<reference key="1">
    <citation type="journal article" date="1999" name="Nature">
        <title>Sequence and analysis of chromosome 2 of the plant Arabidopsis thaliana.</title>
        <authorList>
            <person name="Lin X."/>
            <person name="Kaul S."/>
            <person name="Rounsley S.D."/>
            <person name="Shea T.P."/>
            <person name="Benito M.-I."/>
            <person name="Town C.D."/>
            <person name="Fujii C.Y."/>
            <person name="Mason T.M."/>
            <person name="Bowman C.L."/>
            <person name="Barnstead M.E."/>
            <person name="Feldblyum T.V."/>
            <person name="Buell C.R."/>
            <person name="Ketchum K.A."/>
            <person name="Lee J.J."/>
            <person name="Ronning C.M."/>
            <person name="Koo H.L."/>
            <person name="Moffat K.S."/>
            <person name="Cronin L.A."/>
            <person name="Shen M."/>
            <person name="Pai G."/>
            <person name="Van Aken S."/>
            <person name="Umayam L."/>
            <person name="Tallon L.J."/>
            <person name="Gill J.E."/>
            <person name="Adams M.D."/>
            <person name="Carrera A.J."/>
            <person name="Creasy T.H."/>
            <person name="Goodman H.M."/>
            <person name="Somerville C.R."/>
            <person name="Copenhaver G.P."/>
            <person name="Preuss D."/>
            <person name="Nierman W.C."/>
            <person name="White O."/>
            <person name="Eisen J.A."/>
            <person name="Salzberg S.L."/>
            <person name="Fraser C.M."/>
            <person name="Venter J.C."/>
        </authorList>
    </citation>
    <scope>NUCLEOTIDE SEQUENCE [LARGE SCALE GENOMIC DNA]</scope>
    <source>
        <strain>cv. Columbia</strain>
    </source>
</reference>
<reference key="2">
    <citation type="journal article" date="2017" name="Plant J.">
        <title>Araport11: a complete reannotation of the Arabidopsis thaliana reference genome.</title>
        <authorList>
            <person name="Cheng C.Y."/>
            <person name="Krishnakumar V."/>
            <person name="Chan A.P."/>
            <person name="Thibaud-Nissen F."/>
            <person name="Schobel S."/>
            <person name="Town C.D."/>
        </authorList>
    </citation>
    <scope>GENOME REANNOTATION</scope>
    <source>
        <strain>cv. Columbia</strain>
    </source>
</reference>
<reference key="3">
    <citation type="journal article" date="2003" name="Science">
        <title>Empirical analysis of transcriptional activity in the Arabidopsis genome.</title>
        <authorList>
            <person name="Yamada K."/>
            <person name="Lim J."/>
            <person name="Dale J.M."/>
            <person name="Chen H."/>
            <person name="Shinn P."/>
            <person name="Palm C.J."/>
            <person name="Southwick A.M."/>
            <person name="Wu H.C."/>
            <person name="Kim C.J."/>
            <person name="Nguyen M."/>
            <person name="Pham P.K."/>
            <person name="Cheuk R.F."/>
            <person name="Karlin-Newmann G."/>
            <person name="Liu S.X."/>
            <person name="Lam B."/>
            <person name="Sakano H."/>
            <person name="Wu T."/>
            <person name="Yu G."/>
            <person name="Miranda M."/>
            <person name="Quach H.L."/>
            <person name="Tripp M."/>
            <person name="Chang C.H."/>
            <person name="Lee J.M."/>
            <person name="Toriumi M.J."/>
            <person name="Chan M.M."/>
            <person name="Tang C.C."/>
            <person name="Onodera C.S."/>
            <person name="Deng J.M."/>
            <person name="Akiyama K."/>
            <person name="Ansari Y."/>
            <person name="Arakawa T."/>
            <person name="Banh J."/>
            <person name="Banno F."/>
            <person name="Bowser L."/>
            <person name="Brooks S.Y."/>
            <person name="Carninci P."/>
            <person name="Chao Q."/>
            <person name="Choy N."/>
            <person name="Enju A."/>
            <person name="Goldsmith A.D."/>
            <person name="Gurjal M."/>
            <person name="Hansen N.F."/>
            <person name="Hayashizaki Y."/>
            <person name="Johnson-Hopson C."/>
            <person name="Hsuan V.W."/>
            <person name="Iida K."/>
            <person name="Karnes M."/>
            <person name="Khan S."/>
            <person name="Koesema E."/>
            <person name="Ishida J."/>
            <person name="Jiang P.X."/>
            <person name="Jones T."/>
            <person name="Kawai J."/>
            <person name="Kamiya A."/>
            <person name="Meyers C."/>
            <person name="Nakajima M."/>
            <person name="Narusaka M."/>
            <person name="Seki M."/>
            <person name="Sakurai T."/>
            <person name="Satou M."/>
            <person name="Tamse R."/>
            <person name="Vaysberg M."/>
            <person name="Wallender E.K."/>
            <person name="Wong C."/>
            <person name="Yamamura Y."/>
            <person name="Yuan S."/>
            <person name="Shinozaki K."/>
            <person name="Davis R.W."/>
            <person name="Theologis A."/>
            <person name="Ecker J.R."/>
        </authorList>
    </citation>
    <scope>NUCLEOTIDE SEQUENCE [LARGE SCALE MRNA]</scope>
    <source>
        <strain>cv. Columbia</strain>
    </source>
</reference>
<reference key="4">
    <citation type="journal article" date="2009" name="DNA Res.">
        <title>Analysis of multiple occurrences of alternative splicing events in Arabidopsis thaliana using novel sequenced full-length cDNAs.</title>
        <authorList>
            <person name="Iida K."/>
            <person name="Fukami-Kobayashi K."/>
            <person name="Toyoda A."/>
            <person name="Sakaki Y."/>
            <person name="Kobayashi M."/>
            <person name="Seki M."/>
            <person name="Shinozaki K."/>
        </authorList>
    </citation>
    <scope>NUCLEOTIDE SEQUENCE [LARGE SCALE MRNA]</scope>
    <source>
        <strain>cv. Columbia</strain>
        <tissue>Rosette leaf</tissue>
    </source>
</reference>
<reference key="5">
    <citation type="submission" date="2002-03" db="EMBL/GenBank/DDBJ databases">
        <title>Full-length cDNA from Arabidopsis thaliana.</title>
        <authorList>
            <person name="Brover V.V."/>
            <person name="Troukhan M.E."/>
            <person name="Alexandrov N.A."/>
            <person name="Lu Y.-P."/>
            <person name="Flavell R.B."/>
            <person name="Feldmann K.A."/>
        </authorList>
    </citation>
    <scope>NUCLEOTIDE SEQUENCE [LARGE SCALE MRNA]</scope>
</reference>
<reference key="6">
    <citation type="journal article" date="2006" name="J. Mol. Biol.">
        <title>Structural evidence for adaptive ligand binding of glycolipid transfer protein.</title>
        <authorList>
            <person name="Airenne T.T."/>
            <person name="Kidron H."/>
            <person name="Nymalm Y."/>
            <person name="Nylund M."/>
            <person name="West G."/>
            <person name="Mattjus P."/>
            <person name="Salminen T.A."/>
        </authorList>
    </citation>
    <scope>FUNCTION</scope>
</reference>
<keyword id="KW-0445">Lipid transport</keyword>
<keyword id="KW-1185">Reference proteome</keyword>
<keyword id="KW-0813">Transport</keyword>
<sequence>MEGTVFTPCLEGMKHVKSDQGEMLTKPFLELCKTILPVIDKFGAAMTLVKSDIGGNITRLEKNYLSDPDKFKYLYTFVQVEIESKIAKGSSSCTNGLLWLTRAMDFLVELFRNLVAHQDWSMPQACADSYQKTLKKWHGWLASSTFSMALKLAPDRKKFMDVISGSGNIQADMERFCAEFGPFLHDNHKFLASVGMDDMKAS</sequence>
<gene>
    <name evidence="1" type="primary">GLTP1</name>
    <name evidence="4" type="ordered locus">At2g33470</name>
    <name evidence="5" type="ORF">F4P9.24</name>
</gene>
<name>GLTP1_ARATH</name>